<dbReference type="EC" id="7.1.1.-" evidence="1"/>
<dbReference type="EMBL" id="CP000860">
    <property type="protein sequence ID" value="ACA60648.1"/>
    <property type="molecule type" value="Genomic_DNA"/>
</dbReference>
<dbReference type="RefSeq" id="WP_012303223.1">
    <property type="nucleotide sequence ID" value="NC_010424.1"/>
</dbReference>
<dbReference type="SMR" id="B1I6I5"/>
<dbReference type="STRING" id="477974.Daud_2161"/>
<dbReference type="KEGG" id="dau:Daud_2161"/>
<dbReference type="eggNOG" id="COG0651">
    <property type="taxonomic scope" value="Bacteria"/>
</dbReference>
<dbReference type="HOGENOM" id="CLU_007100_9_5_9"/>
<dbReference type="OrthoDB" id="9807568at2"/>
<dbReference type="Proteomes" id="UP000008544">
    <property type="component" value="Chromosome"/>
</dbReference>
<dbReference type="GO" id="GO:0005886">
    <property type="term" value="C:plasma membrane"/>
    <property type="evidence" value="ECO:0007669"/>
    <property type="project" value="UniProtKB-SubCell"/>
</dbReference>
<dbReference type="GO" id="GO:0008137">
    <property type="term" value="F:NADH dehydrogenase (ubiquinone) activity"/>
    <property type="evidence" value="ECO:0007669"/>
    <property type="project" value="InterPro"/>
</dbReference>
<dbReference type="GO" id="GO:0050136">
    <property type="term" value="F:NADH:ubiquinone reductase (non-electrogenic) activity"/>
    <property type="evidence" value="ECO:0007669"/>
    <property type="project" value="UniProtKB-UniRule"/>
</dbReference>
<dbReference type="GO" id="GO:0048038">
    <property type="term" value="F:quinone binding"/>
    <property type="evidence" value="ECO:0007669"/>
    <property type="project" value="UniProtKB-KW"/>
</dbReference>
<dbReference type="GO" id="GO:0042773">
    <property type="term" value="P:ATP synthesis coupled electron transport"/>
    <property type="evidence" value="ECO:0007669"/>
    <property type="project" value="InterPro"/>
</dbReference>
<dbReference type="HAMAP" id="MF_00445">
    <property type="entry name" value="NDH1_NuoN_1"/>
    <property type="match status" value="1"/>
</dbReference>
<dbReference type="InterPro" id="IPR050586">
    <property type="entry name" value="CPA3_Na-H_Antiporter_D"/>
</dbReference>
<dbReference type="InterPro" id="IPR010096">
    <property type="entry name" value="NADH-Q_OxRdtase_suN/2"/>
</dbReference>
<dbReference type="InterPro" id="IPR003918">
    <property type="entry name" value="NADH_UbQ_OxRdtase"/>
</dbReference>
<dbReference type="InterPro" id="IPR001750">
    <property type="entry name" value="ND/Mrp_TM"/>
</dbReference>
<dbReference type="PANTHER" id="PTHR42703:SF1">
    <property type="entry name" value="NA(+)_H(+) ANTIPORTER SUBUNIT D1"/>
    <property type="match status" value="1"/>
</dbReference>
<dbReference type="PANTHER" id="PTHR42703">
    <property type="entry name" value="NADH DEHYDROGENASE"/>
    <property type="match status" value="1"/>
</dbReference>
<dbReference type="Pfam" id="PF00361">
    <property type="entry name" value="Proton_antipo_M"/>
    <property type="match status" value="1"/>
</dbReference>
<dbReference type="PRINTS" id="PR01437">
    <property type="entry name" value="NUOXDRDTASE4"/>
</dbReference>
<evidence type="ECO:0000255" key="1">
    <source>
        <dbReference type="HAMAP-Rule" id="MF_00445"/>
    </source>
</evidence>
<protein>
    <recommendedName>
        <fullName evidence="1">NADH-quinone oxidoreductase subunit N</fullName>
        <ecNumber evidence="1">7.1.1.-</ecNumber>
    </recommendedName>
    <alternativeName>
        <fullName evidence="1">NADH dehydrogenase I subunit N</fullName>
    </alternativeName>
    <alternativeName>
        <fullName evidence="1">NDH-1 subunit N</fullName>
    </alternativeName>
</protein>
<proteinExistence type="inferred from homology"/>
<gene>
    <name evidence="1" type="primary">nuoN</name>
    <name type="ordered locus">Daud_2161</name>
</gene>
<name>NUON_DESAP</name>
<keyword id="KW-1003">Cell membrane</keyword>
<keyword id="KW-0472">Membrane</keyword>
<keyword id="KW-0520">NAD</keyword>
<keyword id="KW-0874">Quinone</keyword>
<keyword id="KW-1185">Reference proteome</keyword>
<keyword id="KW-1278">Translocase</keyword>
<keyword id="KW-0812">Transmembrane</keyword>
<keyword id="KW-1133">Transmembrane helix</keyword>
<keyword id="KW-0813">Transport</keyword>
<organism>
    <name type="scientific">Desulforudis audaxviator (strain MP104C)</name>
    <dbReference type="NCBI Taxonomy" id="477974"/>
    <lineage>
        <taxon>Bacteria</taxon>
        <taxon>Bacillati</taxon>
        <taxon>Bacillota</taxon>
        <taxon>Clostridia</taxon>
        <taxon>Thermoanaerobacterales</taxon>
        <taxon>Candidatus Desulforudaceae</taxon>
        <taxon>Candidatus Desulforudis</taxon>
    </lineage>
</organism>
<reference key="1">
    <citation type="submission" date="2007-10" db="EMBL/GenBank/DDBJ databases">
        <title>Complete sequence of chromosome of Desulforudis audaxviator MP104C.</title>
        <authorList>
            <person name="Copeland A."/>
            <person name="Lucas S."/>
            <person name="Lapidus A."/>
            <person name="Barry K."/>
            <person name="Glavina del Rio T."/>
            <person name="Dalin E."/>
            <person name="Tice H."/>
            <person name="Bruce D."/>
            <person name="Pitluck S."/>
            <person name="Lowry S.R."/>
            <person name="Larimer F."/>
            <person name="Land M.L."/>
            <person name="Hauser L."/>
            <person name="Kyrpides N."/>
            <person name="Ivanova N.N."/>
            <person name="Richardson P."/>
        </authorList>
    </citation>
    <scope>NUCLEOTIDE SEQUENCE [LARGE SCALE GENOMIC DNA]</scope>
    <source>
        <strain>MP104C</strain>
    </source>
</reference>
<feature type="chain" id="PRO_0000391137" description="NADH-quinone oxidoreductase subunit N">
    <location>
        <begin position="1"/>
        <end position="501"/>
    </location>
</feature>
<feature type="transmembrane region" description="Helical" evidence="1">
    <location>
        <begin position="4"/>
        <end position="24"/>
    </location>
</feature>
<feature type="transmembrane region" description="Helical" evidence="1">
    <location>
        <begin position="34"/>
        <end position="54"/>
    </location>
</feature>
<feature type="transmembrane region" description="Helical" evidence="1">
    <location>
        <begin position="80"/>
        <end position="100"/>
    </location>
</feature>
<feature type="transmembrane region" description="Helical" evidence="1">
    <location>
        <begin position="112"/>
        <end position="132"/>
    </location>
</feature>
<feature type="transmembrane region" description="Helical" evidence="1">
    <location>
        <begin position="134"/>
        <end position="154"/>
    </location>
</feature>
<feature type="transmembrane region" description="Helical" evidence="1">
    <location>
        <begin position="167"/>
        <end position="187"/>
    </location>
</feature>
<feature type="transmembrane region" description="Helical" evidence="1">
    <location>
        <begin position="207"/>
        <end position="227"/>
    </location>
</feature>
<feature type="transmembrane region" description="Helical" evidence="1">
    <location>
        <begin position="241"/>
        <end position="261"/>
    </location>
</feature>
<feature type="transmembrane region" description="Helical" evidence="1">
    <location>
        <begin position="278"/>
        <end position="298"/>
    </location>
</feature>
<feature type="transmembrane region" description="Helical" evidence="1">
    <location>
        <begin position="314"/>
        <end position="334"/>
    </location>
</feature>
<feature type="transmembrane region" description="Helical" evidence="1">
    <location>
        <begin position="335"/>
        <end position="355"/>
    </location>
</feature>
<feature type="transmembrane region" description="Helical" evidence="1">
    <location>
        <begin position="376"/>
        <end position="396"/>
    </location>
</feature>
<feature type="transmembrane region" description="Helical" evidence="1">
    <location>
        <begin position="409"/>
        <end position="429"/>
    </location>
</feature>
<feature type="transmembrane region" description="Helical" evidence="1">
    <location>
        <begin position="463"/>
        <end position="483"/>
    </location>
</feature>
<accession>B1I6I5</accession>
<comment type="function">
    <text evidence="1">NDH-1 shuttles electrons from NADH, via FMN and iron-sulfur (Fe-S) centers, to quinones in the respiratory chain. The immediate electron acceptor for the enzyme in this species is believed to be a menaquinone. Couples the redox reaction to proton translocation (for every two electrons transferred, four hydrogen ions are translocated across the cytoplasmic membrane), and thus conserves the redox energy in a proton gradient.</text>
</comment>
<comment type="catalytic activity">
    <reaction evidence="1">
        <text>a quinone + NADH + 5 H(+)(in) = a quinol + NAD(+) + 4 H(+)(out)</text>
        <dbReference type="Rhea" id="RHEA:57888"/>
        <dbReference type="ChEBI" id="CHEBI:15378"/>
        <dbReference type="ChEBI" id="CHEBI:24646"/>
        <dbReference type="ChEBI" id="CHEBI:57540"/>
        <dbReference type="ChEBI" id="CHEBI:57945"/>
        <dbReference type="ChEBI" id="CHEBI:132124"/>
    </reaction>
</comment>
<comment type="subunit">
    <text evidence="1">NDH-1 is composed of 14 different subunits. Subunits NuoA, H, J, K, L, M, N constitute the membrane sector of the complex.</text>
</comment>
<comment type="subcellular location">
    <subcellularLocation>
        <location evidence="1">Cell membrane</location>
        <topology evidence="1">Multi-pass membrane protein</topology>
    </subcellularLocation>
</comment>
<comment type="similarity">
    <text evidence="1">Belongs to the complex I subunit 2 family.</text>
</comment>
<sequence length="501" mass="53477">MTAHLPILIVIIPLFVAMAARLLVRLSVPFTRGFVLAAALAVLASGAVALAETLVRGEPWRYYVSGWPPPWGIELVIDPLAGGLIVLVAFFGLAALVYAGPYLQGRTPREQGSFYALFLLAKAGLLGMCATGDLFNLYVFLEISSLAAYALIAFGGRRSIVAALRYLIIGTAAACFYLLGVGYLYAMTGSLNMADLAVLLPPLMDSPVVILALVFIVAGLGIKMALFPLHGWLPDAYSYTPAPVLAFMAAVMTKVSAYALYRILYFVTEAAGPVSPTLQVLGWMAAAGILFGSIMAIAQRDLWRMLAYSSVAQVGYIVLGLAVGNVLALYGALLHVLSHALVKGGLFFIAGGVSWETGVRRVSDFVGIAKKMPLTMGAFVAAALSMIGLPPTLGFFSKWYLVLGCLEAGAWVFVAVLVVSSLLTAVYFFRVIENAYLKGLPQPGARAERPVPPGARRFRLELPASMLVPILVLGIGVVVLGLFNEQIISNVIQYALPWRLP</sequence>